<organism>
    <name type="scientific">Treponema denticola (strain ATCC 35405 / DSM 14222 / CIP 103919 / JCM 8153 / KCTC 15104)</name>
    <dbReference type="NCBI Taxonomy" id="243275"/>
    <lineage>
        <taxon>Bacteria</taxon>
        <taxon>Pseudomonadati</taxon>
        <taxon>Spirochaetota</taxon>
        <taxon>Spirochaetia</taxon>
        <taxon>Spirochaetales</taxon>
        <taxon>Treponemataceae</taxon>
        <taxon>Treponema</taxon>
    </lineage>
</organism>
<sequence>MAFSPKRVKHRKVQRGRIKGEATRCNNIDFGDYALVSLEPFLLTNRQIEAARVALNRKIKRGGKLWIRVFPDKPYSKKPAEVRMGGGKGAPEYWVAVVKPGTIIFELAGVDKNLAEQAMTLAGSKLPFKTRFAEQIQAD</sequence>
<reference key="1">
    <citation type="journal article" date="2004" name="Proc. Natl. Acad. Sci. U.S.A.">
        <title>Comparison of the genome of the oral pathogen Treponema denticola with other spirochete genomes.</title>
        <authorList>
            <person name="Seshadri R."/>
            <person name="Myers G.S.A."/>
            <person name="Tettelin H."/>
            <person name="Eisen J.A."/>
            <person name="Heidelberg J.F."/>
            <person name="Dodson R.J."/>
            <person name="Davidsen T.M."/>
            <person name="DeBoy R.T."/>
            <person name="Fouts D.E."/>
            <person name="Haft D.H."/>
            <person name="Selengut J."/>
            <person name="Ren Q."/>
            <person name="Brinkac L.M."/>
            <person name="Madupu R."/>
            <person name="Kolonay J.F."/>
            <person name="Durkin S.A."/>
            <person name="Daugherty S.C."/>
            <person name="Shetty J."/>
            <person name="Shvartsbeyn A."/>
            <person name="Gebregeorgis E."/>
            <person name="Geer K."/>
            <person name="Tsegaye G."/>
            <person name="Malek J.A."/>
            <person name="Ayodeji B."/>
            <person name="Shatsman S."/>
            <person name="McLeod M.P."/>
            <person name="Smajs D."/>
            <person name="Howell J.K."/>
            <person name="Pal S."/>
            <person name="Amin A."/>
            <person name="Vashisth P."/>
            <person name="McNeill T.Z."/>
            <person name="Xiang Q."/>
            <person name="Sodergren E."/>
            <person name="Baca E."/>
            <person name="Weinstock G.M."/>
            <person name="Norris S.J."/>
            <person name="Fraser C.M."/>
            <person name="Paulsen I.T."/>
        </authorList>
    </citation>
    <scope>NUCLEOTIDE SEQUENCE [LARGE SCALE GENOMIC DNA]</scope>
    <source>
        <strain>ATCC 35405 / DSM 14222 / CIP 103919 / JCM 8153 / KCTC 15104</strain>
    </source>
</reference>
<feature type="chain" id="PRO_0000062239" description="Large ribosomal subunit protein uL16">
    <location>
        <begin position="1"/>
        <end position="139"/>
    </location>
</feature>
<proteinExistence type="inferred from homology"/>
<evidence type="ECO:0000255" key="1">
    <source>
        <dbReference type="HAMAP-Rule" id="MF_01342"/>
    </source>
</evidence>
<evidence type="ECO:0000305" key="2"/>
<accession>Q73PM5</accession>
<protein>
    <recommendedName>
        <fullName evidence="1">Large ribosomal subunit protein uL16</fullName>
    </recommendedName>
    <alternativeName>
        <fullName evidence="2">50S ribosomal protein L16</fullName>
    </alternativeName>
</protein>
<name>RL16_TREDE</name>
<comment type="function">
    <text evidence="1">Binds 23S rRNA and is also seen to make contacts with the A and possibly P site tRNAs.</text>
</comment>
<comment type="subunit">
    <text evidence="1">Part of the 50S ribosomal subunit.</text>
</comment>
<comment type="similarity">
    <text evidence="1">Belongs to the universal ribosomal protein uL16 family.</text>
</comment>
<gene>
    <name evidence="1" type="primary">rplP</name>
    <name type="ordered locus">TDE_0774</name>
</gene>
<keyword id="KW-1185">Reference proteome</keyword>
<keyword id="KW-0687">Ribonucleoprotein</keyword>
<keyword id="KW-0689">Ribosomal protein</keyword>
<keyword id="KW-0694">RNA-binding</keyword>
<keyword id="KW-0699">rRNA-binding</keyword>
<keyword id="KW-0820">tRNA-binding</keyword>
<dbReference type="EMBL" id="AE017226">
    <property type="protein sequence ID" value="AAS11265.1"/>
    <property type="molecule type" value="Genomic_DNA"/>
</dbReference>
<dbReference type="RefSeq" id="NP_971384.1">
    <property type="nucleotide sequence ID" value="NC_002967.9"/>
</dbReference>
<dbReference type="RefSeq" id="WP_002670003.1">
    <property type="nucleotide sequence ID" value="NC_002967.9"/>
</dbReference>
<dbReference type="SMR" id="Q73PM5"/>
<dbReference type="STRING" id="243275.TDE_0774"/>
<dbReference type="PaxDb" id="243275-TDE_0774"/>
<dbReference type="GeneID" id="2740314"/>
<dbReference type="KEGG" id="tde:TDE_0774"/>
<dbReference type="PATRIC" id="fig|243275.7.peg.747"/>
<dbReference type="eggNOG" id="COG0197">
    <property type="taxonomic scope" value="Bacteria"/>
</dbReference>
<dbReference type="HOGENOM" id="CLU_078858_2_1_12"/>
<dbReference type="OrthoDB" id="9802589at2"/>
<dbReference type="Proteomes" id="UP000008212">
    <property type="component" value="Chromosome"/>
</dbReference>
<dbReference type="GO" id="GO:0022625">
    <property type="term" value="C:cytosolic large ribosomal subunit"/>
    <property type="evidence" value="ECO:0007669"/>
    <property type="project" value="TreeGrafter"/>
</dbReference>
<dbReference type="GO" id="GO:0019843">
    <property type="term" value="F:rRNA binding"/>
    <property type="evidence" value="ECO:0007669"/>
    <property type="project" value="UniProtKB-UniRule"/>
</dbReference>
<dbReference type="GO" id="GO:0003735">
    <property type="term" value="F:structural constituent of ribosome"/>
    <property type="evidence" value="ECO:0007669"/>
    <property type="project" value="InterPro"/>
</dbReference>
<dbReference type="GO" id="GO:0000049">
    <property type="term" value="F:tRNA binding"/>
    <property type="evidence" value="ECO:0007669"/>
    <property type="project" value="UniProtKB-KW"/>
</dbReference>
<dbReference type="GO" id="GO:0006412">
    <property type="term" value="P:translation"/>
    <property type="evidence" value="ECO:0007669"/>
    <property type="project" value="UniProtKB-UniRule"/>
</dbReference>
<dbReference type="CDD" id="cd01433">
    <property type="entry name" value="Ribosomal_L16_L10e"/>
    <property type="match status" value="1"/>
</dbReference>
<dbReference type="FunFam" id="3.90.1170.10:FF:000001">
    <property type="entry name" value="50S ribosomal protein L16"/>
    <property type="match status" value="1"/>
</dbReference>
<dbReference type="Gene3D" id="3.90.1170.10">
    <property type="entry name" value="Ribosomal protein L10e/L16"/>
    <property type="match status" value="1"/>
</dbReference>
<dbReference type="HAMAP" id="MF_01342">
    <property type="entry name" value="Ribosomal_uL16"/>
    <property type="match status" value="1"/>
</dbReference>
<dbReference type="InterPro" id="IPR047873">
    <property type="entry name" value="Ribosomal_uL16"/>
</dbReference>
<dbReference type="InterPro" id="IPR000114">
    <property type="entry name" value="Ribosomal_uL16_bact-type"/>
</dbReference>
<dbReference type="InterPro" id="IPR020798">
    <property type="entry name" value="Ribosomal_uL16_CS"/>
</dbReference>
<dbReference type="InterPro" id="IPR016180">
    <property type="entry name" value="Ribosomal_uL16_dom"/>
</dbReference>
<dbReference type="InterPro" id="IPR036920">
    <property type="entry name" value="Ribosomal_uL16_sf"/>
</dbReference>
<dbReference type="NCBIfam" id="TIGR01164">
    <property type="entry name" value="rplP_bact"/>
    <property type="match status" value="1"/>
</dbReference>
<dbReference type="PANTHER" id="PTHR12220">
    <property type="entry name" value="50S/60S RIBOSOMAL PROTEIN L16"/>
    <property type="match status" value="1"/>
</dbReference>
<dbReference type="PANTHER" id="PTHR12220:SF13">
    <property type="entry name" value="LARGE RIBOSOMAL SUBUNIT PROTEIN UL16M"/>
    <property type="match status" value="1"/>
</dbReference>
<dbReference type="Pfam" id="PF00252">
    <property type="entry name" value="Ribosomal_L16"/>
    <property type="match status" value="1"/>
</dbReference>
<dbReference type="PRINTS" id="PR00060">
    <property type="entry name" value="RIBOSOMALL16"/>
</dbReference>
<dbReference type="SUPFAM" id="SSF54686">
    <property type="entry name" value="Ribosomal protein L16p/L10e"/>
    <property type="match status" value="1"/>
</dbReference>
<dbReference type="PROSITE" id="PS00586">
    <property type="entry name" value="RIBOSOMAL_L16_1"/>
    <property type="match status" value="1"/>
</dbReference>
<dbReference type="PROSITE" id="PS00701">
    <property type="entry name" value="RIBOSOMAL_L16_2"/>
    <property type="match status" value="1"/>
</dbReference>